<dbReference type="EMBL" id="CR380956">
    <property type="protein sequence ID" value="CAG61048.1"/>
    <property type="molecule type" value="Genomic_DNA"/>
</dbReference>
<dbReference type="RefSeq" id="XP_448097.1">
    <property type="nucleotide sequence ID" value="XM_448097.1"/>
</dbReference>
<dbReference type="SMR" id="Q6FNU7"/>
<dbReference type="FunCoup" id="Q6FNU7">
    <property type="interactions" value="804"/>
</dbReference>
<dbReference type="STRING" id="284593.Q6FNU7"/>
<dbReference type="EnsemblFungi" id="CAGL0J08932g-T">
    <property type="protein sequence ID" value="CAGL0J08932g-T-p1"/>
    <property type="gene ID" value="CAGL0J08932g"/>
</dbReference>
<dbReference type="KEGG" id="cgr:2889472"/>
<dbReference type="CGD" id="CAL0133660">
    <property type="gene designation" value="CAGL0J08932g"/>
</dbReference>
<dbReference type="VEuPathDB" id="FungiDB:CAGL0J08932g"/>
<dbReference type="eggNOG" id="KOG2983">
    <property type="taxonomic scope" value="Eukaryota"/>
</dbReference>
<dbReference type="HOGENOM" id="CLU_034402_2_0_1"/>
<dbReference type="InParanoid" id="Q6FNU7"/>
<dbReference type="OMA" id="TFPDPNF"/>
<dbReference type="Proteomes" id="UP000002428">
    <property type="component" value="Chromosome J"/>
</dbReference>
<dbReference type="GO" id="GO:0005737">
    <property type="term" value="C:cytoplasm"/>
    <property type="evidence" value="ECO:0007669"/>
    <property type="project" value="UniProtKB-SubCell"/>
</dbReference>
<dbReference type="GO" id="GO:0005524">
    <property type="term" value="F:ATP binding"/>
    <property type="evidence" value="ECO:0007669"/>
    <property type="project" value="EnsemblFungi"/>
</dbReference>
<dbReference type="GO" id="GO:0000287">
    <property type="term" value="F:magnesium ion binding"/>
    <property type="evidence" value="ECO:0007669"/>
    <property type="project" value="EnsemblFungi"/>
</dbReference>
<dbReference type="GO" id="GO:0044183">
    <property type="term" value="F:protein folding chaperone"/>
    <property type="evidence" value="ECO:0007669"/>
    <property type="project" value="EnsemblFungi"/>
</dbReference>
<dbReference type="GO" id="GO:0051301">
    <property type="term" value="P:cell division"/>
    <property type="evidence" value="ECO:0007669"/>
    <property type="project" value="UniProtKB-KW"/>
</dbReference>
<dbReference type="GO" id="GO:1905143">
    <property type="term" value="P:eukaryotic translation initiation factor 2 complex assembly"/>
    <property type="evidence" value="ECO:0007669"/>
    <property type="project" value="EnsemblFungi"/>
</dbReference>
<dbReference type="InterPro" id="IPR009772">
    <property type="entry name" value="CDC123"/>
</dbReference>
<dbReference type="PANTHER" id="PTHR15323:SF6">
    <property type="entry name" value="CELL DIVISION CYCLE PROTEIN 123 HOMOLOG"/>
    <property type="match status" value="1"/>
</dbReference>
<dbReference type="PANTHER" id="PTHR15323">
    <property type="entry name" value="D123 PROTEIN"/>
    <property type="match status" value="1"/>
</dbReference>
<dbReference type="Pfam" id="PF07065">
    <property type="entry name" value="D123"/>
    <property type="match status" value="1"/>
</dbReference>
<dbReference type="PIRSF" id="PIRSF007807">
    <property type="entry name" value="Cdc123"/>
    <property type="match status" value="1"/>
</dbReference>
<keyword id="KW-0131">Cell cycle</keyword>
<keyword id="KW-0132">Cell division</keyword>
<keyword id="KW-0963">Cytoplasm</keyword>
<keyword id="KW-1185">Reference proteome</keyword>
<sequence length="355" mass="41529">MSEEYAVLSELPVTCSQIDNCAFSFWYEKFKKHVPKSRVIKPLPEQFIQYLEQDGIKLPMSSTELSTYTDDVARTEDNEYSDWEGDEDTATEYEPGIEPLNDFPELHNQIKEIIVELGPVTPKLNWSAPKDATWILPNNTTKCNEVNEIYLLLNASNYIVHDLNHAYDECIDKKEGFSTPEYELVLRQWFAINPALEFRVFVKDGKVAAVSQRDLNYYDYLDKLTDTFKDLIDEFVEDEMVPQFPDKSFVTDLYIPRPFNRVFLIDINPFSRKTDPLLFTWNEIININAQPDRDYELRLITENNIGRFASKEHSQNHVPKDVVDASLDPERIRELSQKWSELLLQQEKESSDEEK</sequence>
<name>CD123_CANGA</name>
<accession>Q6FNU7</accession>
<organism>
    <name type="scientific">Candida glabrata (strain ATCC 2001 / BCRC 20586 / JCM 3761 / NBRC 0622 / NRRL Y-65 / CBS 138)</name>
    <name type="common">Yeast</name>
    <name type="synonym">Nakaseomyces glabratus</name>
    <dbReference type="NCBI Taxonomy" id="284593"/>
    <lineage>
        <taxon>Eukaryota</taxon>
        <taxon>Fungi</taxon>
        <taxon>Dikarya</taxon>
        <taxon>Ascomycota</taxon>
        <taxon>Saccharomycotina</taxon>
        <taxon>Saccharomycetes</taxon>
        <taxon>Saccharomycetales</taxon>
        <taxon>Saccharomycetaceae</taxon>
        <taxon>Nakaseomyces</taxon>
    </lineage>
</organism>
<comment type="function">
    <text evidence="1">Regulates the cell cycle in a nutrient dependent manner.</text>
</comment>
<comment type="subcellular location">
    <subcellularLocation>
        <location evidence="1">Cytoplasm</location>
    </subcellularLocation>
</comment>
<comment type="similarity">
    <text evidence="2">Belongs to the CDC123 family.</text>
</comment>
<proteinExistence type="inferred from homology"/>
<protein>
    <recommendedName>
        <fullName>Cell division cycle protein 123</fullName>
    </recommendedName>
</protein>
<gene>
    <name type="primary">CDC123</name>
    <name type="ordered locus">CAGL0J08932g</name>
</gene>
<reference key="1">
    <citation type="journal article" date="2004" name="Nature">
        <title>Genome evolution in yeasts.</title>
        <authorList>
            <person name="Dujon B."/>
            <person name="Sherman D."/>
            <person name="Fischer G."/>
            <person name="Durrens P."/>
            <person name="Casaregola S."/>
            <person name="Lafontaine I."/>
            <person name="de Montigny J."/>
            <person name="Marck C."/>
            <person name="Neuveglise C."/>
            <person name="Talla E."/>
            <person name="Goffard N."/>
            <person name="Frangeul L."/>
            <person name="Aigle M."/>
            <person name="Anthouard V."/>
            <person name="Babour A."/>
            <person name="Barbe V."/>
            <person name="Barnay S."/>
            <person name="Blanchin S."/>
            <person name="Beckerich J.-M."/>
            <person name="Beyne E."/>
            <person name="Bleykasten C."/>
            <person name="Boisrame A."/>
            <person name="Boyer J."/>
            <person name="Cattolico L."/>
            <person name="Confanioleri F."/>
            <person name="de Daruvar A."/>
            <person name="Despons L."/>
            <person name="Fabre E."/>
            <person name="Fairhead C."/>
            <person name="Ferry-Dumazet H."/>
            <person name="Groppi A."/>
            <person name="Hantraye F."/>
            <person name="Hennequin C."/>
            <person name="Jauniaux N."/>
            <person name="Joyet P."/>
            <person name="Kachouri R."/>
            <person name="Kerrest A."/>
            <person name="Koszul R."/>
            <person name="Lemaire M."/>
            <person name="Lesur I."/>
            <person name="Ma L."/>
            <person name="Muller H."/>
            <person name="Nicaud J.-M."/>
            <person name="Nikolski M."/>
            <person name="Oztas S."/>
            <person name="Ozier-Kalogeropoulos O."/>
            <person name="Pellenz S."/>
            <person name="Potier S."/>
            <person name="Richard G.-F."/>
            <person name="Straub M.-L."/>
            <person name="Suleau A."/>
            <person name="Swennen D."/>
            <person name="Tekaia F."/>
            <person name="Wesolowski-Louvel M."/>
            <person name="Westhof E."/>
            <person name="Wirth B."/>
            <person name="Zeniou-Meyer M."/>
            <person name="Zivanovic Y."/>
            <person name="Bolotin-Fukuhara M."/>
            <person name="Thierry A."/>
            <person name="Bouchier C."/>
            <person name="Caudron B."/>
            <person name="Scarpelli C."/>
            <person name="Gaillardin C."/>
            <person name="Weissenbach J."/>
            <person name="Wincker P."/>
            <person name="Souciet J.-L."/>
        </authorList>
    </citation>
    <scope>NUCLEOTIDE SEQUENCE [LARGE SCALE GENOMIC DNA]</scope>
    <source>
        <strain>ATCC 2001 / BCRC 20586 / JCM 3761 / NBRC 0622 / NRRL Y-65 / CBS 138</strain>
    </source>
</reference>
<feature type="chain" id="PRO_0000350942" description="Cell division cycle protein 123">
    <location>
        <begin position="1"/>
        <end position="355"/>
    </location>
</feature>
<evidence type="ECO:0000250" key="1"/>
<evidence type="ECO:0000305" key="2"/>